<name>YQGF_LISMF</name>
<protein>
    <recommendedName>
        <fullName evidence="1">Putative pre-16S rRNA nuclease</fullName>
        <ecNumber evidence="1">3.1.-.-</ecNumber>
    </recommendedName>
</protein>
<reference key="1">
    <citation type="journal article" date="2004" name="Nucleic Acids Res.">
        <title>Whole genome comparisons of serotype 4b and 1/2a strains of the food-borne pathogen Listeria monocytogenes reveal new insights into the core genome components of this species.</title>
        <authorList>
            <person name="Nelson K.E."/>
            <person name="Fouts D.E."/>
            <person name="Mongodin E.F."/>
            <person name="Ravel J."/>
            <person name="DeBoy R.T."/>
            <person name="Kolonay J.F."/>
            <person name="Rasko D.A."/>
            <person name="Angiuoli S.V."/>
            <person name="Gill S.R."/>
            <person name="Paulsen I.T."/>
            <person name="Peterson J.D."/>
            <person name="White O."/>
            <person name="Nelson W.C."/>
            <person name="Nierman W.C."/>
            <person name="Beanan M.J."/>
            <person name="Brinkac L.M."/>
            <person name="Daugherty S.C."/>
            <person name="Dodson R.J."/>
            <person name="Durkin A.S."/>
            <person name="Madupu R."/>
            <person name="Haft D.H."/>
            <person name="Selengut J."/>
            <person name="Van Aken S.E."/>
            <person name="Khouri H.M."/>
            <person name="Fedorova N."/>
            <person name="Forberger H.A."/>
            <person name="Tran B."/>
            <person name="Kathariou S."/>
            <person name="Wonderling L.D."/>
            <person name="Uhlich G.A."/>
            <person name="Bayles D.O."/>
            <person name="Luchansky J.B."/>
            <person name="Fraser C.M."/>
        </authorList>
    </citation>
    <scope>NUCLEOTIDE SEQUENCE [LARGE SCALE GENOMIC DNA]</scope>
    <source>
        <strain>F2365</strain>
    </source>
</reference>
<keyword id="KW-0963">Cytoplasm</keyword>
<keyword id="KW-0378">Hydrolase</keyword>
<keyword id="KW-0540">Nuclease</keyword>
<keyword id="KW-0690">Ribosome biogenesis</keyword>
<proteinExistence type="inferred from homology"/>
<comment type="function">
    <text evidence="1">Could be a nuclease involved in processing of the 5'-end of pre-16S rRNA.</text>
</comment>
<comment type="subcellular location">
    <subcellularLocation>
        <location evidence="1">Cytoplasm</location>
    </subcellularLocation>
</comment>
<comment type="similarity">
    <text evidence="1">Belongs to the YqgF nuclease family.</text>
</comment>
<organism>
    <name type="scientific">Listeria monocytogenes serotype 4b (strain F2365)</name>
    <dbReference type="NCBI Taxonomy" id="265669"/>
    <lineage>
        <taxon>Bacteria</taxon>
        <taxon>Bacillati</taxon>
        <taxon>Bacillota</taxon>
        <taxon>Bacilli</taxon>
        <taxon>Bacillales</taxon>
        <taxon>Listeriaceae</taxon>
        <taxon>Listeria</taxon>
    </lineage>
</organism>
<feature type="chain" id="PRO_0000172085" description="Putative pre-16S rRNA nuclease">
    <location>
        <begin position="1"/>
        <end position="138"/>
    </location>
</feature>
<evidence type="ECO:0000255" key="1">
    <source>
        <dbReference type="HAMAP-Rule" id="MF_00651"/>
    </source>
</evidence>
<gene>
    <name type="ordered locus">LMOf2365_1521</name>
</gene>
<dbReference type="EC" id="3.1.-.-" evidence="1"/>
<dbReference type="EMBL" id="AE017262">
    <property type="protein sequence ID" value="AAT04296.1"/>
    <property type="molecule type" value="Genomic_DNA"/>
</dbReference>
<dbReference type="SMR" id="Q71ZG8"/>
<dbReference type="KEGG" id="lmf:LMOf2365_1521"/>
<dbReference type="HOGENOM" id="CLU_098240_2_0_9"/>
<dbReference type="GO" id="GO:0005829">
    <property type="term" value="C:cytosol"/>
    <property type="evidence" value="ECO:0007669"/>
    <property type="project" value="TreeGrafter"/>
</dbReference>
<dbReference type="GO" id="GO:0004518">
    <property type="term" value="F:nuclease activity"/>
    <property type="evidence" value="ECO:0007669"/>
    <property type="project" value="UniProtKB-KW"/>
</dbReference>
<dbReference type="GO" id="GO:0000967">
    <property type="term" value="P:rRNA 5'-end processing"/>
    <property type="evidence" value="ECO:0007669"/>
    <property type="project" value="UniProtKB-UniRule"/>
</dbReference>
<dbReference type="CDD" id="cd16964">
    <property type="entry name" value="YqgF"/>
    <property type="match status" value="1"/>
</dbReference>
<dbReference type="FunFam" id="3.30.420.140:FF:000003">
    <property type="entry name" value="Putative pre-16S rRNA nuclease"/>
    <property type="match status" value="1"/>
</dbReference>
<dbReference type="Gene3D" id="3.30.420.140">
    <property type="entry name" value="YqgF/RNase H-like domain"/>
    <property type="match status" value="1"/>
</dbReference>
<dbReference type="HAMAP" id="MF_00651">
    <property type="entry name" value="Nuclease_YqgF"/>
    <property type="match status" value="1"/>
</dbReference>
<dbReference type="InterPro" id="IPR012337">
    <property type="entry name" value="RNaseH-like_sf"/>
</dbReference>
<dbReference type="InterPro" id="IPR005227">
    <property type="entry name" value="YqgF"/>
</dbReference>
<dbReference type="InterPro" id="IPR006641">
    <property type="entry name" value="YqgF/RNaseH-like_dom"/>
</dbReference>
<dbReference type="InterPro" id="IPR037027">
    <property type="entry name" value="YqgF/RNaseH-like_dom_sf"/>
</dbReference>
<dbReference type="NCBIfam" id="TIGR00250">
    <property type="entry name" value="RNAse_H_YqgF"/>
    <property type="match status" value="1"/>
</dbReference>
<dbReference type="PANTHER" id="PTHR33317">
    <property type="entry name" value="POLYNUCLEOTIDYL TRANSFERASE, RIBONUCLEASE H-LIKE SUPERFAMILY PROTEIN"/>
    <property type="match status" value="1"/>
</dbReference>
<dbReference type="PANTHER" id="PTHR33317:SF4">
    <property type="entry name" value="POLYNUCLEOTIDYL TRANSFERASE, RIBONUCLEASE H-LIKE SUPERFAMILY PROTEIN"/>
    <property type="match status" value="1"/>
</dbReference>
<dbReference type="Pfam" id="PF03652">
    <property type="entry name" value="RuvX"/>
    <property type="match status" value="1"/>
</dbReference>
<dbReference type="SMART" id="SM00732">
    <property type="entry name" value="YqgFc"/>
    <property type="match status" value="1"/>
</dbReference>
<dbReference type="SUPFAM" id="SSF53098">
    <property type="entry name" value="Ribonuclease H-like"/>
    <property type="match status" value="1"/>
</dbReference>
<accession>Q71ZG8</accession>
<sequence>MRIMGLDVGSKTVGVAISDPLGWTAQGVETIQIDENRKQFGYDRVKELVLEYEVEKVVVGLPKNMNNTIGPRAESSKIYAEVLESRIGLPVVLWDERLTTSAAERTLIEADVSRKKRKEVIDKLAAVMILQSYLDTTN</sequence>